<evidence type="ECO:0000255" key="1">
    <source>
        <dbReference type="HAMAP-Rule" id="MF_00135"/>
    </source>
</evidence>
<organism>
    <name type="scientific">Geobacter sp. (strain M21)</name>
    <dbReference type="NCBI Taxonomy" id="443144"/>
    <lineage>
        <taxon>Bacteria</taxon>
        <taxon>Pseudomonadati</taxon>
        <taxon>Thermodesulfobacteriota</taxon>
        <taxon>Desulfuromonadia</taxon>
        <taxon>Geobacterales</taxon>
        <taxon>Geobacteraceae</taxon>
        <taxon>Geobacter</taxon>
    </lineage>
</organism>
<proteinExistence type="inferred from homology"/>
<feature type="chain" id="PRO_1000203208" description="N-(5'-phosphoribosyl)anthranilate isomerase">
    <location>
        <begin position="1"/>
        <end position="204"/>
    </location>
</feature>
<comment type="catalytic activity">
    <reaction evidence="1">
        <text>N-(5-phospho-beta-D-ribosyl)anthranilate = 1-(2-carboxyphenylamino)-1-deoxy-D-ribulose 5-phosphate</text>
        <dbReference type="Rhea" id="RHEA:21540"/>
        <dbReference type="ChEBI" id="CHEBI:18277"/>
        <dbReference type="ChEBI" id="CHEBI:58613"/>
        <dbReference type="EC" id="5.3.1.24"/>
    </reaction>
</comment>
<comment type="pathway">
    <text evidence="1">Amino-acid biosynthesis; L-tryptophan biosynthesis; L-tryptophan from chorismate: step 3/5.</text>
</comment>
<comment type="similarity">
    <text evidence="1">Belongs to the TrpF family.</text>
</comment>
<dbReference type="EC" id="5.3.1.24" evidence="1"/>
<dbReference type="EMBL" id="CP001661">
    <property type="protein sequence ID" value="ACT18306.1"/>
    <property type="molecule type" value="Genomic_DNA"/>
</dbReference>
<dbReference type="SMR" id="C6DYM2"/>
<dbReference type="STRING" id="443144.GM21_2257"/>
<dbReference type="KEGG" id="gem:GM21_2257"/>
<dbReference type="eggNOG" id="COG0135">
    <property type="taxonomic scope" value="Bacteria"/>
</dbReference>
<dbReference type="HOGENOM" id="CLU_076364_2_0_7"/>
<dbReference type="OrthoDB" id="9796196at2"/>
<dbReference type="UniPathway" id="UPA00035">
    <property type="reaction ID" value="UER00042"/>
</dbReference>
<dbReference type="GO" id="GO:0004640">
    <property type="term" value="F:phosphoribosylanthranilate isomerase activity"/>
    <property type="evidence" value="ECO:0007669"/>
    <property type="project" value="UniProtKB-UniRule"/>
</dbReference>
<dbReference type="GO" id="GO:0000162">
    <property type="term" value="P:L-tryptophan biosynthetic process"/>
    <property type="evidence" value="ECO:0007669"/>
    <property type="project" value="UniProtKB-UniRule"/>
</dbReference>
<dbReference type="CDD" id="cd00405">
    <property type="entry name" value="PRAI"/>
    <property type="match status" value="1"/>
</dbReference>
<dbReference type="FunFam" id="3.20.20.70:FF:000075">
    <property type="entry name" value="Tryptophan biosynthesis protein TRP1"/>
    <property type="match status" value="1"/>
</dbReference>
<dbReference type="Gene3D" id="3.20.20.70">
    <property type="entry name" value="Aldolase class I"/>
    <property type="match status" value="1"/>
</dbReference>
<dbReference type="HAMAP" id="MF_00135">
    <property type="entry name" value="PRAI"/>
    <property type="match status" value="1"/>
</dbReference>
<dbReference type="InterPro" id="IPR013785">
    <property type="entry name" value="Aldolase_TIM"/>
</dbReference>
<dbReference type="InterPro" id="IPR001240">
    <property type="entry name" value="PRAI_dom"/>
</dbReference>
<dbReference type="InterPro" id="IPR011060">
    <property type="entry name" value="RibuloseP-bd_barrel"/>
</dbReference>
<dbReference type="InterPro" id="IPR044643">
    <property type="entry name" value="TrpF_fam"/>
</dbReference>
<dbReference type="NCBIfam" id="NF002298">
    <property type="entry name" value="PRK01222.1-4"/>
    <property type="match status" value="1"/>
</dbReference>
<dbReference type="PANTHER" id="PTHR42894">
    <property type="entry name" value="N-(5'-PHOSPHORIBOSYL)ANTHRANILATE ISOMERASE"/>
    <property type="match status" value="1"/>
</dbReference>
<dbReference type="PANTHER" id="PTHR42894:SF1">
    <property type="entry name" value="N-(5'-PHOSPHORIBOSYL)ANTHRANILATE ISOMERASE"/>
    <property type="match status" value="1"/>
</dbReference>
<dbReference type="Pfam" id="PF00697">
    <property type="entry name" value="PRAI"/>
    <property type="match status" value="1"/>
</dbReference>
<dbReference type="SUPFAM" id="SSF51366">
    <property type="entry name" value="Ribulose-phoshate binding barrel"/>
    <property type="match status" value="1"/>
</dbReference>
<accession>C6DYM2</accession>
<protein>
    <recommendedName>
        <fullName evidence="1">N-(5'-phosphoribosyl)anthranilate isomerase</fullName>
        <shortName evidence="1">PRAI</shortName>
        <ecNumber evidence="1">5.3.1.24</ecNumber>
    </recommendedName>
</protein>
<keyword id="KW-0028">Amino-acid biosynthesis</keyword>
<keyword id="KW-0057">Aromatic amino acid biosynthesis</keyword>
<keyword id="KW-0413">Isomerase</keyword>
<keyword id="KW-0822">Tryptophan biosynthesis</keyword>
<name>TRPF_GEOSM</name>
<gene>
    <name evidence="1" type="primary">trpF</name>
    <name type="ordered locus">GM21_2257</name>
</gene>
<sequence>MTKVKICGITTLEDALMAVEAGADALGFVFFEKSPRYIGPEAAARIIRELPPFVQVVGLFVDAELDFVNRTADTCGLDLVQLHGEESPAYCGLVRRRVMKAFRVRGPESLAALPDYKVSAYLLDAYSPASHGGTGERFDWEHAVAAKGEGRIVLAGGLDPDNVAQAVAKVAPYAVDVSSGVELSPGRKDREKVRRFVAEAKKLS</sequence>
<reference key="1">
    <citation type="submission" date="2009-07" db="EMBL/GenBank/DDBJ databases">
        <title>Complete sequence of Geobacter sp. M21.</title>
        <authorList>
            <consortium name="US DOE Joint Genome Institute"/>
            <person name="Lucas S."/>
            <person name="Copeland A."/>
            <person name="Lapidus A."/>
            <person name="Glavina del Rio T."/>
            <person name="Dalin E."/>
            <person name="Tice H."/>
            <person name="Bruce D."/>
            <person name="Goodwin L."/>
            <person name="Pitluck S."/>
            <person name="Saunders E."/>
            <person name="Brettin T."/>
            <person name="Detter J.C."/>
            <person name="Han C."/>
            <person name="Larimer F."/>
            <person name="Land M."/>
            <person name="Hauser L."/>
            <person name="Kyrpides N."/>
            <person name="Ovchinnikova G."/>
            <person name="Lovley D."/>
        </authorList>
    </citation>
    <scope>NUCLEOTIDE SEQUENCE [LARGE SCALE GENOMIC DNA]</scope>
    <source>
        <strain>M21</strain>
    </source>
</reference>